<name>ANM16_ARATH</name>
<comment type="function">
    <text evidence="1">Arginine methyltransferase that can both catalyze the formation of omega-N monomethylarginine (MMA) and symmetrical dimethylarginine (sDMA).</text>
</comment>
<comment type="similarity">
    <text evidence="2">Belongs to the class I-like SAM-binding methyltransferase superfamily. Protein arginine N-methyltransferase family. PRMT7 subfamily.</text>
</comment>
<comment type="sequence caution" evidence="3">
    <conflict type="frameshift">
        <sequence resource="EMBL-CDS" id="AAL11573"/>
    </conflict>
</comment>
<comment type="sequence caution" evidence="3">
    <conflict type="frameshift">
        <sequence resource="EMBL-CDS" id="AAN18172"/>
    </conflict>
</comment>
<comment type="sequence caution" evidence="3">
    <conflict type="erroneous gene model prediction">
        <sequence resource="EMBL-CDS" id="CAB10433"/>
    </conflict>
</comment>
<comment type="sequence caution" evidence="3">
    <conflict type="erroneous gene model prediction">
        <sequence resource="EMBL-CDS" id="CAB78699"/>
    </conflict>
</comment>
<feature type="chain" id="PRO_0000294001" description="Protein arginine N-methyltransferase 1.6">
    <location>
        <begin position="1"/>
        <end position="724"/>
    </location>
</feature>
<feature type="domain" description="SAM-dependent MTase PRMT-type 1" evidence="2">
    <location>
        <begin position="61"/>
        <end position="388"/>
    </location>
</feature>
<feature type="domain" description="SAM-dependent MTase PRMT-type 2" evidence="2">
    <location>
        <begin position="395"/>
        <end position="721"/>
    </location>
</feature>
<feature type="active site" evidence="1">
    <location>
        <position position="183"/>
    </location>
</feature>
<feature type="active site" evidence="1">
    <location>
        <position position="192"/>
    </location>
</feature>
<feature type="sequence conflict" description="In Ref. 4; AAN18172/AAL11573." evidence="3" ref="4">
    <original>P</original>
    <variation>S</variation>
    <location>
        <position position="634"/>
    </location>
</feature>
<feature type="sequence conflict" description="In Ref. 4; AAN18172/AAL11573." evidence="3" ref="4">
    <original>M</original>
    <variation>V</variation>
    <location>
        <position position="660"/>
    </location>
</feature>
<keyword id="KW-0489">Methyltransferase</keyword>
<keyword id="KW-1185">Reference proteome</keyword>
<keyword id="KW-0677">Repeat</keyword>
<keyword id="KW-0949">S-adenosyl-L-methionine</keyword>
<keyword id="KW-0808">Transferase</keyword>
<protein>
    <recommendedName>
        <fullName>Protein arginine N-methyltransferase 1.6</fullName>
        <shortName>AtPRMT16</shortName>
        <shortName>AtPRMT7</shortName>
        <ecNumber>2.1.1.-</ecNumber>
    </recommendedName>
</protein>
<organism>
    <name type="scientific">Arabidopsis thaliana</name>
    <name type="common">Mouse-ear cress</name>
    <dbReference type="NCBI Taxonomy" id="3702"/>
    <lineage>
        <taxon>Eukaryota</taxon>
        <taxon>Viridiplantae</taxon>
        <taxon>Streptophyta</taxon>
        <taxon>Embryophyta</taxon>
        <taxon>Tracheophyta</taxon>
        <taxon>Spermatophyta</taxon>
        <taxon>Magnoliopsida</taxon>
        <taxon>eudicotyledons</taxon>
        <taxon>Gunneridae</taxon>
        <taxon>Pentapetalae</taxon>
        <taxon>rosids</taxon>
        <taxon>malvids</taxon>
        <taxon>Brassicales</taxon>
        <taxon>Brassicaceae</taxon>
        <taxon>Camelineae</taxon>
        <taxon>Arabidopsis</taxon>
    </lineage>
</organism>
<reference key="1">
    <citation type="journal article" date="1998" name="Nature">
        <title>Analysis of 1.9 Mb of contiguous sequence from chromosome 4 of Arabidopsis thaliana.</title>
        <authorList>
            <person name="Bevan M."/>
            <person name="Bancroft I."/>
            <person name="Bent E."/>
            <person name="Love K."/>
            <person name="Goodman H.M."/>
            <person name="Dean C."/>
            <person name="Bergkamp R."/>
            <person name="Dirkse W."/>
            <person name="van Staveren M."/>
            <person name="Stiekema W."/>
            <person name="Drost L."/>
            <person name="Ridley P."/>
            <person name="Hudson S.-A."/>
            <person name="Patel K."/>
            <person name="Murphy G."/>
            <person name="Piffanelli P."/>
            <person name="Wedler H."/>
            <person name="Wedler E."/>
            <person name="Wambutt R."/>
            <person name="Weitzenegger T."/>
            <person name="Pohl T."/>
            <person name="Terryn N."/>
            <person name="Gielen J."/>
            <person name="Villarroel R."/>
            <person name="De Clercq R."/>
            <person name="van Montagu M."/>
            <person name="Lecharny A."/>
            <person name="Aubourg S."/>
            <person name="Gy I."/>
            <person name="Kreis M."/>
            <person name="Lao N."/>
            <person name="Kavanagh T."/>
            <person name="Hempel S."/>
            <person name="Kotter P."/>
            <person name="Entian K.-D."/>
            <person name="Rieger M."/>
            <person name="Schaefer M."/>
            <person name="Funk B."/>
            <person name="Mueller-Auer S."/>
            <person name="Silvey M."/>
            <person name="James R."/>
            <person name="Monfort A."/>
            <person name="Pons A."/>
            <person name="Puigdomenech P."/>
            <person name="Douka A."/>
            <person name="Voukelatou E."/>
            <person name="Milioni D."/>
            <person name="Hatzopoulos P."/>
            <person name="Piravandi E."/>
            <person name="Obermaier B."/>
            <person name="Hilbert H."/>
            <person name="Duesterhoeft A."/>
            <person name="Moores T."/>
            <person name="Jones J.D.G."/>
            <person name="Eneva T."/>
            <person name="Palme K."/>
            <person name="Benes V."/>
            <person name="Rechmann S."/>
            <person name="Ansorge W."/>
            <person name="Cooke R."/>
            <person name="Berger C."/>
            <person name="Delseny M."/>
            <person name="Voet M."/>
            <person name="Volckaert G."/>
            <person name="Mewes H.-W."/>
            <person name="Klosterman S."/>
            <person name="Schueller C."/>
            <person name="Chalwatzis N."/>
        </authorList>
    </citation>
    <scope>NUCLEOTIDE SEQUENCE [LARGE SCALE GENOMIC DNA]</scope>
    <source>
        <strain>cv. Columbia</strain>
    </source>
</reference>
<reference key="2">
    <citation type="journal article" date="1999" name="Nature">
        <title>Sequence and analysis of chromosome 4 of the plant Arabidopsis thaliana.</title>
        <authorList>
            <person name="Mayer K.F.X."/>
            <person name="Schueller C."/>
            <person name="Wambutt R."/>
            <person name="Murphy G."/>
            <person name="Volckaert G."/>
            <person name="Pohl T."/>
            <person name="Duesterhoeft A."/>
            <person name="Stiekema W."/>
            <person name="Entian K.-D."/>
            <person name="Terryn N."/>
            <person name="Harris B."/>
            <person name="Ansorge W."/>
            <person name="Brandt P."/>
            <person name="Grivell L.A."/>
            <person name="Rieger M."/>
            <person name="Weichselgartner M."/>
            <person name="de Simone V."/>
            <person name="Obermaier B."/>
            <person name="Mache R."/>
            <person name="Mueller M."/>
            <person name="Kreis M."/>
            <person name="Delseny M."/>
            <person name="Puigdomenech P."/>
            <person name="Watson M."/>
            <person name="Schmidtheini T."/>
            <person name="Reichert B."/>
            <person name="Portetelle D."/>
            <person name="Perez-Alonso M."/>
            <person name="Boutry M."/>
            <person name="Bancroft I."/>
            <person name="Vos P."/>
            <person name="Hoheisel J."/>
            <person name="Zimmermann W."/>
            <person name="Wedler H."/>
            <person name="Ridley P."/>
            <person name="Langham S.-A."/>
            <person name="McCullagh B."/>
            <person name="Bilham L."/>
            <person name="Robben J."/>
            <person name="van der Schueren J."/>
            <person name="Grymonprez B."/>
            <person name="Chuang Y.-J."/>
            <person name="Vandenbussche F."/>
            <person name="Braeken M."/>
            <person name="Weltjens I."/>
            <person name="Voet M."/>
            <person name="Bastiaens I."/>
            <person name="Aert R."/>
            <person name="Defoor E."/>
            <person name="Weitzenegger T."/>
            <person name="Bothe G."/>
            <person name="Ramsperger U."/>
            <person name="Hilbert H."/>
            <person name="Braun M."/>
            <person name="Holzer E."/>
            <person name="Brandt A."/>
            <person name="Peters S."/>
            <person name="van Staveren M."/>
            <person name="Dirkse W."/>
            <person name="Mooijman P."/>
            <person name="Klein Lankhorst R."/>
            <person name="Rose M."/>
            <person name="Hauf J."/>
            <person name="Koetter P."/>
            <person name="Berneiser S."/>
            <person name="Hempel S."/>
            <person name="Feldpausch M."/>
            <person name="Lamberth S."/>
            <person name="Van den Daele H."/>
            <person name="De Keyser A."/>
            <person name="Buysshaert C."/>
            <person name="Gielen J."/>
            <person name="Villarroel R."/>
            <person name="De Clercq R."/>
            <person name="van Montagu M."/>
            <person name="Rogers J."/>
            <person name="Cronin A."/>
            <person name="Quail M.A."/>
            <person name="Bray-Allen S."/>
            <person name="Clark L."/>
            <person name="Doggett J."/>
            <person name="Hall S."/>
            <person name="Kay M."/>
            <person name="Lennard N."/>
            <person name="McLay K."/>
            <person name="Mayes R."/>
            <person name="Pettett A."/>
            <person name="Rajandream M.A."/>
            <person name="Lyne M."/>
            <person name="Benes V."/>
            <person name="Rechmann S."/>
            <person name="Borkova D."/>
            <person name="Bloecker H."/>
            <person name="Scharfe M."/>
            <person name="Grimm M."/>
            <person name="Loehnert T.-H."/>
            <person name="Dose S."/>
            <person name="de Haan M."/>
            <person name="Maarse A.C."/>
            <person name="Schaefer M."/>
            <person name="Mueller-Auer S."/>
            <person name="Gabel C."/>
            <person name="Fuchs M."/>
            <person name="Fartmann B."/>
            <person name="Granderath K."/>
            <person name="Dauner D."/>
            <person name="Herzl A."/>
            <person name="Neumann S."/>
            <person name="Argiriou A."/>
            <person name="Vitale D."/>
            <person name="Liguori R."/>
            <person name="Piravandi E."/>
            <person name="Massenet O."/>
            <person name="Quigley F."/>
            <person name="Clabauld G."/>
            <person name="Muendlein A."/>
            <person name="Felber R."/>
            <person name="Schnabl S."/>
            <person name="Hiller R."/>
            <person name="Schmidt W."/>
            <person name="Lecharny A."/>
            <person name="Aubourg S."/>
            <person name="Chefdor F."/>
            <person name="Cooke R."/>
            <person name="Berger C."/>
            <person name="Monfort A."/>
            <person name="Casacuberta E."/>
            <person name="Gibbons T."/>
            <person name="Weber N."/>
            <person name="Vandenbol M."/>
            <person name="Bargues M."/>
            <person name="Terol J."/>
            <person name="Torres A."/>
            <person name="Perez-Perez A."/>
            <person name="Purnelle B."/>
            <person name="Bent E."/>
            <person name="Johnson S."/>
            <person name="Tacon D."/>
            <person name="Jesse T."/>
            <person name="Heijnen L."/>
            <person name="Schwarz S."/>
            <person name="Scholler P."/>
            <person name="Heber S."/>
            <person name="Francs P."/>
            <person name="Bielke C."/>
            <person name="Frishman D."/>
            <person name="Haase D."/>
            <person name="Lemcke K."/>
            <person name="Mewes H.-W."/>
            <person name="Stocker S."/>
            <person name="Zaccaria P."/>
            <person name="Bevan M."/>
            <person name="Wilson R.K."/>
            <person name="de la Bastide M."/>
            <person name="Habermann K."/>
            <person name="Parnell L."/>
            <person name="Dedhia N."/>
            <person name="Gnoj L."/>
            <person name="Schutz K."/>
            <person name="Huang E."/>
            <person name="Spiegel L."/>
            <person name="Sekhon M."/>
            <person name="Murray J."/>
            <person name="Sheet P."/>
            <person name="Cordes M."/>
            <person name="Abu-Threideh J."/>
            <person name="Stoneking T."/>
            <person name="Kalicki J."/>
            <person name="Graves T."/>
            <person name="Harmon G."/>
            <person name="Edwards J."/>
            <person name="Latreille P."/>
            <person name="Courtney L."/>
            <person name="Cloud J."/>
            <person name="Abbott A."/>
            <person name="Scott K."/>
            <person name="Johnson D."/>
            <person name="Minx P."/>
            <person name="Bentley D."/>
            <person name="Fulton B."/>
            <person name="Miller N."/>
            <person name="Greco T."/>
            <person name="Kemp K."/>
            <person name="Kramer J."/>
            <person name="Fulton L."/>
            <person name="Mardis E."/>
            <person name="Dante M."/>
            <person name="Pepin K."/>
            <person name="Hillier L.W."/>
            <person name="Nelson J."/>
            <person name="Spieth J."/>
            <person name="Ryan E."/>
            <person name="Andrews S."/>
            <person name="Geisel C."/>
            <person name="Layman D."/>
            <person name="Du H."/>
            <person name="Ali J."/>
            <person name="Berghoff A."/>
            <person name="Jones K."/>
            <person name="Drone K."/>
            <person name="Cotton M."/>
            <person name="Joshu C."/>
            <person name="Antonoiu B."/>
            <person name="Zidanic M."/>
            <person name="Strong C."/>
            <person name="Sun H."/>
            <person name="Lamar B."/>
            <person name="Yordan C."/>
            <person name="Ma P."/>
            <person name="Zhong J."/>
            <person name="Preston R."/>
            <person name="Vil D."/>
            <person name="Shekher M."/>
            <person name="Matero A."/>
            <person name="Shah R."/>
            <person name="Swaby I.K."/>
            <person name="O'Shaughnessy A."/>
            <person name="Rodriguez M."/>
            <person name="Hoffman J."/>
            <person name="Till S."/>
            <person name="Granat S."/>
            <person name="Shohdy N."/>
            <person name="Hasegawa A."/>
            <person name="Hameed A."/>
            <person name="Lodhi M."/>
            <person name="Johnson A."/>
            <person name="Chen E."/>
            <person name="Marra M.A."/>
            <person name="Martienssen R."/>
            <person name="McCombie W.R."/>
        </authorList>
    </citation>
    <scope>NUCLEOTIDE SEQUENCE [LARGE SCALE GENOMIC DNA]</scope>
    <source>
        <strain>cv. Columbia</strain>
    </source>
</reference>
<reference key="3">
    <citation type="journal article" date="2017" name="Plant J.">
        <title>Araport11: a complete reannotation of the Arabidopsis thaliana reference genome.</title>
        <authorList>
            <person name="Cheng C.Y."/>
            <person name="Krishnakumar V."/>
            <person name="Chan A.P."/>
            <person name="Thibaud-Nissen F."/>
            <person name="Schobel S."/>
            <person name="Town C.D."/>
        </authorList>
    </citation>
    <scope>GENOME REANNOTATION</scope>
    <source>
        <strain>cv. Columbia</strain>
    </source>
</reference>
<reference key="4">
    <citation type="journal article" date="2003" name="Science">
        <title>Empirical analysis of transcriptional activity in the Arabidopsis genome.</title>
        <authorList>
            <person name="Yamada K."/>
            <person name="Lim J."/>
            <person name="Dale J.M."/>
            <person name="Chen H."/>
            <person name="Shinn P."/>
            <person name="Palm C.J."/>
            <person name="Southwick A.M."/>
            <person name="Wu H.C."/>
            <person name="Kim C.J."/>
            <person name="Nguyen M."/>
            <person name="Pham P.K."/>
            <person name="Cheuk R.F."/>
            <person name="Karlin-Newmann G."/>
            <person name="Liu S.X."/>
            <person name="Lam B."/>
            <person name="Sakano H."/>
            <person name="Wu T."/>
            <person name="Yu G."/>
            <person name="Miranda M."/>
            <person name="Quach H.L."/>
            <person name="Tripp M."/>
            <person name="Chang C.H."/>
            <person name="Lee J.M."/>
            <person name="Toriumi M.J."/>
            <person name="Chan M.M."/>
            <person name="Tang C.C."/>
            <person name="Onodera C.S."/>
            <person name="Deng J.M."/>
            <person name="Akiyama K."/>
            <person name="Ansari Y."/>
            <person name="Arakawa T."/>
            <person name="Banh J."/>
            <person name="Banno F."/>
            <person name="Bowser L."/>
            <person name="Brooks S.Y."/>
            <person name="Carninci P."/>
            <person name="Chao Q."/>
            <person name="Choy N."/>
            <person name="Enju A."/>
            <person name="Goldsmith A.D."/>
            <person name="Gurjal M."/>
            <person name="Hansen N.F."/>
            <person name="Hayashizaki Y."/>
            <person name="Johnson-Hopson C."/>
            <person name="Hsuan V.W."/>
            <person name="Iida K."/>
            <person name="Karnes M."/>
            <person name="Khan S."/>
            <person name="Koesema E."/>
            <person name="Ishida J."/>
            <person name="Jiang P.X."/>
            <person name="Jones T."/>
            <person name="Kawai J."/>
            <person name="Kamiya A."/>
            <person name="Meyers C."/>
            <person name="Nakajima M."/>
            <person name="Narusaka M."/>
            <person name="Seki M."/>
            <person name="Sakurai T."/>
            <person name="Satou M."/>
            <person name="Tamse R."/>
            <person name="Vaysberg M."/>
            <person name="Wallender E.K."/>
            <person name="Wong C."/>
            <person name="Yamamura Y."/>
            <person name="Yuan S."/>
            <person name="Shinozaki K."/>
            <person name="Davis R.W."/>
            <person name="Theologis A."/>
            <person name="Ecker J.R."/>
        </authorList>
    </citation>
    <scope>NUCLEOTIDE SEQUENCE [LARGE SCALE MRNA]</scope>
    <source>
        <strain>cv. Columbia</strain>
    </source>
</reference>
<reference key="5">
    <citation type="journal article" date="2007" name="Pharmacol. Ther.">
        <title>Protein arginine methyltransferases: evolution and assessment of their pharmacological and therapeutic potential.</title>
        <authorList>
            <person name="Krause C.D."/>
            <person name="Yang Z.-H."/>
            <person name="Kim Y.-S."/>
            <person name="Lee J.-H."/>
            <person name="Cook J.R."/>
            <person name="Pestka S."/>
        </authorList>
    </citation>
    <scope>GENE FAMILY</scope>
    <scope>NOMENCLATURE</scope>
</reference>
<sequence length="724" mass="80870">MSPLSSLPPKTFISSFHCHSVTRLRRSVTARTMSSQSSQRVFQLRQDPLTGNSEWIVIEDNDQPGTSTDGLLATTSYLDMLNDSRRNIAYRLAIEKTITEPCHVLDIGAGTGLLSMMAVRAMRGDSKGMVTACESYLPMVKLMRKVMHKNGMTKNINLINKRSDELKVGSEDIASRADVLVSEILDSELLGEGLIPSLQHAHDMLLVDNPKTVPYRATTYCQLVESTFLCNLQDLRNNEAKTSDGVRLVPPGLESLFGIKSQQYSMHVDAIEKEIKLLSEPVKIFEFDFWKRPESNGELDVHIEAKTTGSVHAIISWWVLQLDSEGTIFYSTAPRWIDSNSEIGVRDWCDHWKQCVWFTPGTGVSISKGEKVHLHASHTCTNILYNLKKTQSLTHERTHFPLSTGDLHLTLPPERVAIYGDSIYRQSLFEATRKALQGKSYPQCLVIDDSLLLPLMALHISNRSRVLSLSPGLQENAARYFEAIADSNGFSKDRFEYFRDGKTNLAKAYPGKIDLLIGEPYYSGLENGLPWQNLRFWKDRTLLDSVLSEDAVVMPYKGVLRGCAMYLPDLWKSRCCLGSVEGFDHTLVNTTLGGCGDLPSGKDSPCLPFFIWQCGETKILSKEFTVMEFDFSKPITGPCSGEVQIEFIKPGVCHGIALWMDWVMDEENSTVISTGPDDKYWKQGVKLLGKPVTVRMEGPSSSIGIQASLDLSSNSELIVTHTIS</sequence>
<proteinExistence type="evidence at transcript level"/>
<dbReference type="EC" id="2.1.1.-"/>
<dbReference type="EMBL" id="Z97341">
    <property type="protein sequence ID" value="CAB10433.1"/>
    <property type="status" value="ALT_SEQ"/>
    <property type="molecule type" value="Genomic_DNA"/>
</dbReference>
<dbReference type="EMBL" id="AL161544">
    <property type="protein sequence ID" value="CAB78699.1"/>
    <property type="status" value="ALT_SEQ"/>
    <property type="molecule type" value="Genomic_DNA"/>
</dbReference>
<dbReference type="EMBL" id="CP002687">
    <property type="protein sequence ID" value="AEE83772.1"/>
    <property type="molecule type" value="Genomic_DNA"/>
</dbReference>
<dbReference type="EMBL" id="AF424579">
    <property type="protein sequence ID" value="AAL11573.1"/>
    <property type="status" value="ALT_FRAME"/>
    <property type="molecule type" value="mRNA"/>
</dbReference>
<dbReference type="EMBL" id="BT000603">
    <property type="protein sequence ID" value="AAN18172.1"/>
    <property type="status" value="ALT_FRAME"/>
    <property type="molecule type" value="mRNA"/>
</dbReference>
<dbReference type="PIR" id="G71432">
    <property type="entry name" value="G71432"/>
</dbReference>
<dbReference type="RefSeq" id="NP_567508.1">
    <property type="nucleotide sequence ID" value="NM_117758.3"/>
</dbReference>
<dbReference type="SMR" id="Q944R7"/>
<dbReference type="FunCoup" id="Q944R7">
    <property type="interactions" value="3835"/>
</dbReference>
<dbReference type="STRING" id="3702.Q944R7"/>
<dbReference type="iPTMnet" id="Q944R7"/>
<dbReference type="PaxDb" id="3702-AT4G16570.1"/>
<dbReference type="ProteomicsDB" id="244433"/>
<dbReference type="EnsemblPlants" id="AT4G16570.1">
    <property type="protein sequence ID" value="AT4G16570.1"/>
    <property type="gene ID" value="AT4G16570"/>
</dbReference>
<dbReference type="GeneID" id="827358"/>
<dbReference type="Gramene" id="AT4G16570.1">
    <property type="protein sequence ID" value="AT4G16570.1"/>
    <property type="gene ID" value="AT4G16570"/>
</dbReference>
<dbReference type="KEGG" id="ath:AT4G16570"/>
<dbReference type="Araport" id="AT4G16570"/>
<dbReference type="TAIR" id="AT4G16570">
    <property type="gene designation" value="PRMT7"/>
</dbReference>
<dbReference type="eggNOG" id="KOG1501">
    <property type="taxonomic scope" value="Eukaryota"/>
</dbReference>
<dbReference type="HOGENOM" id="CLU_015180_1_0_1"/>
<dbReference type="InParanoid" id="Q944R7"/>
<dbReference type="OMA" id="CHHDEYS"/>
<dbReference type="PhylomeDB" id="Q944R7"/>
<dbReference type="PRO" id="PR:Q944R7"/>
<dbReference type="Proteomes" id="UP000006548">
    <property type="component" value="Chromosome 4"/>
</dbReference>
<dbReference type="ExpressionAtlas" id="Q944R7">
    <property type="expression patterns" value="baseline and differential"/>
</dbReference>
<dbReference type="GO" id="GO:0016274">
    <property type="term" value="F:protein-arginine N-methyltransferase activity"/>
    <property type="evidence" value="ECO:0007669"/>
    <property type="project" value="InterPro"/>
</dbReference>
<dbReference type="GO" id="GO:0032259">
    <property type="term" value="P:methylation"/>
    <property type="evidence" value="ECO:0007669"/>
    <property type="project" value="UniProtKB-KW"/>
</dbReference>
<dbReference type="FunFam" id="3.40.50.150:FF:000167">
    <property type="entry name" value="Protein arginine N-methyltransferase"/>
    <property type="match status" value="1"/>
</dbReference>
<dbReference type="FunFam" id="2.70.160.11:FF:000013">
    <property type="entry name" value="Protein arginine N-methyltransferase 1.6"/>
    <property type="match status" value="1"/>
</dbReference>
<dbReference type="FunFam" id="2.70.160.11:FF:000017">
    <property type="entry name" value="Protein arginine N-methyltransferase 1.6"/>
    <property type="match status" value="1"/>
</dbReference>
<dbReference type="FunFam" id="3.40.50.150:FF:000070">
    <property type="entry name" value="Protein arginine N-methyltransferase 7"/>
    <property type="match status" value="1"/>
</dbReference>
<dbReference type="Gene3D" id="2.70.160.11">
    <property type="entry name" value="Hnrnp arginine n-methyltransferase1"/>
    <property type="match status" value="2"/>
</dbReference>
<dbReference type="Gene3D" id="3.40.50.150">
    <property type="entry name" value="Vaccinia Virus protein VP39"/>
    <property type="match status" value="2"/>
</dbReference>
<dbReference type="InterPro" id="IPR025799">
    <property type="entry name" value="Arg_MeTrfase"/>
</dbReference>
<dbReference type="InterPro" id="IPR014644">
    <property type="entry name" value="MeTrfase_PRMT7"/>
</dbReference>
<dbReference type="InterPro" id="IPR055135">
    <property type="entry name" value="PRMT_dom"/>
</dbReference>
<dbReference type="InterPro" id="IPR029063">
    <property type="entry name" value="SAM-dependent_MTases_sf"/>
</dbReference>
<dbReference type="PANTHER" id="PTHR11006">
    <property type="entry name" value="PROTEIN ARGININE N-METHYLTRANSFERASE"/>
    <property type="match status" value="1"/>
</dbReference>
<dbReference type="PANTHER" id="PTHR11006:SF4">
    <property type="entry name" value="PROTEIN ARGININE N-METHYLTRANSFERASE 7"/>
    <property type="match status" value="1"/>
</dbReference>
<dbReference type="Pfam" id="PF22528">
    <property type="entry name" value="PRMT_C"/>
    <property type="match status" value="2"/>
</dbReference>
<dbReference type="PIRSF" id="PIRSF036946">
    <property type="entry name" value="Arg_N-mtase"/>
    <property type="match status" value="1"/>
</dbReference>
<dbReference type="SUPFAM" id="SSF53335">
    <property type="entry name" value="S-adenosyl-L-methionine-dependent methyltransferases"/>
    <property type="match status" value="2"/>
</dbReference>
<dbReference type="PROSITE" id="PS51678">
    <property type="entry name" value="SAM_MT_PRMT"/>
    <property type="match status" value="2"/>
</dbReference>
<evidence type="ECO:0000250" key="1"/>
<evidence type="ECO:0000255" key="2">
    <source>
        <dbReference type="PROSITE-ProRule" id="PRU01015"/>
    </source>
</evidence>
<evidence type="ECO:0000305" key="3"/>
<accession>Q944R7</accession>
<accession>O23501</accession>
<gene>
    <name type="primary">PRMT16</name>
    <name type="synonym">PRMT7</name>
    <name type="ordered locus">At4g16570</name>
    <name type="ORF">dl4310w</name>
    <name type="ORF">FCAALL.195</name>
</gene>